<organism>
    <name type="scientific">Arabidopsis thaliana</name>
    <name type="common">Mouse-ear cress</name>
    <dbReference type="NCBI Taxonomy" id="3702"/>
    <lineage>
        <taxon>Eukaryota</taxon>
        <taxon>Viridiplantae</taxon>
        <taxon>Streptophyta</taxon>
        <taxon>Embryophyta</taxon>
        <taxon>Tracheophyta</taxon>
        <taxon>Spermatophyta</taxon>
        <taxon>Magnoliopsida</taxon>
        <taxon>eudicotyledons</taxon>
        <taxon>Gunneridae</taxon>
        <taxon>Pentapetalae</taxon>
        <taxon>rosids</taxon>
        <taxon>malvids</taxon>
        <taxon>Brassicales</taxon>
        <taxon>Brassicaceae</taxon>
        <taxon>Camelineae</taxon>
        <taxon>Arabidopsis</taxon>
    </lineage>
</organism>
<comment type="function">
    <text evidence="2 3 8">Catalyzes the reversible stereospecific interconversion of fumarate to L-malate (PubMed:29688630). Catalyzes the hydration of fumarate to L-malate in the tricarboxylic acid (TCA) cycle to facilitate a transition step in the production of energy in the form of NADH (By similarity).</text>
</comment>
<comment type="catalytic activity">
    <reaction evidence="8">
        <text>(S)-malate = fumarate + H2O</text>
        <dbReference type="Rhea" id="RHEA:12460"/>
        <dbReference type="ChEBI" id="CHEBI:15377"/>
        <dbReference type="ChEBI" id="CHEBI:15589"/>
        <dbReference type="ChEBI" id="CHEBI:29806"/>
        <dbReference type="EC" id="4.2.1.2"/>
    </reaction>
    <physiologicalReaction direction="left-to-right" evidence="8">
        <dbReference type="Rhea" id="RHEA:12461"/>
    </physiologicalReaction>
    <physiologicalReaction direction="right-to-left" evidence="8">
        <dbReference type="Rhea" id="RHEA:12462"/>
    </physiologicalReaction>
</comment>
<comment type="activity regulation">
    <text evidence="8">Fumarate hydratase activity (fumarate to L-malate) is strongly inhibited by phosphoenolpyruvate, citrate, oxaloacetate, ATP and ADP (PubMed:29688630). Malate dehydratase activity (malate to fumarate) is activated by oxaloacetate, pyruvate, Asn and Gln (PubMed:29688630). Malate dehydratase activity (malate to fumarate) is inhibited by citrate, succinate, ADP, ATP, glucose-6P and phosphoenolpyruvate (PubMed:29688630).</text>
</comment>
<comment type="biophysicochemical properties">
    <kinetics>
        <KM evidence="8">0.7 mM for fumarate (at pH 8.0)</KM>
        <KM evidence="8">1.8 mM for (S)-malate (at pH 8.0)</KM>
        <text evidence="8">kcat is 21 sec(-1) for fumarate (at pH 8.0) (PubMed:29688630). kcat is 15.3 sec(-1) for (S)-malate (at pH 8.0) (PubMed:29688630).</text>
    </kinetics>
</comment>
<comment type="pathway">
    <text evidence="2 3">Carbohydrate metabolism; tricarboxylic acid cycle; (S)-malate from fumarate: step 1/1.</text>
</comment>
<comment type="subunit">
    <text evidence="8">Homotetramer.</text>
</comment>
<comment type="subcellular location">
    <subcellularLocation>
        <location evidence="5 6 12">Mitochondrion</location>
    </subcellularLocation>
</comment>
<comment type="disruption phenotype">
    <text evidence="6">Embryonic lethality.</text>
</comment>
<comment type="miscellaneous">
    <text evidence="1 4">There are 2 substrate-binding sites: the catalytic A site, and the non-catalytic B site that may play a role in the transfer of substrate or product between the active site and the solvent. Alternatively, the B site may bind allosteric effectors.</text>
</comment>
<comment type="similarity">
    <text evidence="11">Belongs to the class-II fumarase/aspartase family. Fumarase subfamily.</text>
</comment>
<proteinExistence type="evidence at protein level"/>
<feature type="transit peptide" description="Mitochondrion" evidence="7">
    <location>
        <begin position="1"/>
        <end position="28"/>
    </location>
</feature>
<feature type="chain" id="PRO_0000010329" description="Fumarate hydratase 1, mitochondrial">
    <location>
        <begin position="29"/>
        <end position="492"/>
    </location>
</feature>
<feature type="active site" description="Proton donor/acceptor" evidence="1">
    <location>
        <position position="216"/>
    </location>
</feature>
<feature type="active site" evidence="4">
    <location>
        <position position="346"/>
    </location>
</feature>
<feature type="binding site" evidence="1">
    <location>
        <begin position="127"/>
        <end position="129"/>
    </location>
    <ligand>
        <name>substrate</name>
    </ligand>
</feature>
<feature type="binding site" description="in site B" evidence="1">
    <location>
        <begin position="157"/>
        <end position="160"/>
    </location>
    <ligand>
        <name>substrate</name>
    </ligand>
</feature>
<feature type="binding site" evidence="1">
    <location>
        <begin position="167"/>
        <end position="169"/>
    </location>
    <ligand>
        <name>substrate</name>
    </ligand>
</feature>
<feature type="binding site" evidence="4">
    <location>
        <position position="215"/>
    </location>
    <ligand>
        <name>substrate</name>
    </ligand>
</feature>
<feature type="binding site" evidence="4">
    <location>
        <position position="347"/>
    </location>
    <ligand>
        <name>substrate</name>
    </ligand>
</feature>
<feature type="binding site" evidence="4">
    <location>
        <begin position="352"/>
        <end position="354"/>
    </location>
    <ligand>
        <name>substrate</name>
    </ligand>
</feature>
<feature type="site" description="Important for catalytic activity" evidence="1">
    <location>
        <position position="359"/>
    </location>
</feature>
<feature type="sequence conflict" description="In Ref. 1; AAB39989." evidence="11" ref="1">
    <original>RR</original>
    <variation>A</variation>
    <location>
        <begin position="8"/>
        <end position="9"/>
    </location>
</feature>
<feature type="sequence conflict" description="In Ref. 1; AAB39989." evidence="11" ref="1">
    <original>S</original>
    <variation>R</variation>
    <location>
        <position position="197"/>
    </location>
</feature>
<feature type="sequence conflict" description="In Ref. 1; AAB39989." evidence="11" ref="1">
    <original>IA</original>
    <variation>TS</variation>
    <location>
        <begin position="393"/>
        <end position="394"/>
    </location>
</feature>
<feature type="sequence conflict" description="In Ref. 1; AAB39989." evidence="11" ref="1">
    <original>P</original>
    <variation>R</variation>
    <location>
        <position position="442"/>
    </location>
</feature>
<feature type="sequence conflict" description="In Ref. 1; AAB39989." evidence="11" ref="1">
    <original>Y</original>
    <variation>C</variation>
    <location>
        <position position="446"/>
    </location>
</feature>
<sequence length="492" mass="53000">MSIYVASRRLSGGTTVTALRYATSLRSYSTSFREERDTFGPIQVPSDKLWGAQTQRSLQNFEIGGERERMPEPIVRAFGVLKKCAAKVNMEYGLDPTIGKAIMQAAQEVAEGKLNDHFPLVVWQTGSGTQSNMNANEVIANRAAEILGRKRGEKCVHPNDHVNRSQSSNDTFPTVMHIAAATEINSRLIPSLKTLHSTLESKSFEFKDIVKIGRTHTQDATPLTLGQEFGGYATQVKYGLNRVTCTLPRLYQLAQGGTAVGTGLNTKKGFDVKIAAAVAEETNLPFVTAENKFEALAAHDACVETSGSLNTIATSLMKIANDIRFLGSGPRCGLGELVLPENEPGSSIMPGKVNPTQCEALTMVCAQVMGNHVAVTVGGSNGHFELNVFKPVIASALLHSVRLIADASASFEKNCVRGIEANRERISKLLHESLMLVTSLNPKIGYDNAAAVAKKAHKEGCTLKEAALNLGVLTAEEFDTLVVPEKMIGPSD</sequence>
<name>FUM1_ARATH</name>
<gene>
    <name evidence="9" type="primary">FUM1</name>
    <name type="ordered locus">At2g47510</name>
    <name type="ORF">T30B22.19</name>
</gene>
<reference key="1">
    <citation type="submission" date="1996-12" db="EMBL/GenBank/DDBJ databases">
        <authorList>
            <person name="Behal R.H."/>
            <person name="Oliver D.J."/>
        </authorList>
    </citation>
    <scope>NUCLEOTIDE SEQUENCE [MRNA]</scope>
</reference>
<reference key="2">
    <citation type="journal article" date="1999" name="Nature">
        <title>Sequence and analysis of chromosome 2 of the plant Arabidopsis thaliana.</title>
        <authorList>
            <person name="Lin X."/>
            <person name="Kaul S."/>
            <person name="Rounsley S.D."/>
            <person name="Shea T.P."/>
            <person name="Benito M.-I."/>
            <person name="Town C.D."/>
            <person name="Fujii C.Y."/>
            <person name="Mason T.M."/>
            <person name="Bowman C.L."/>
            <person name="Barnstead M.E."/>
            <person name="Feldblyum T.V."/>
            <person name="Buell C.R."/>
            <person name="Ketchum K.A."/>
            <person name="Lee J.J."/>
            <person name="Ronning C.M."/>
            <person name="Koo H.L."/>
            <person name="Moffat K.S."/>
            <person name="Cronin L.A."/>
            <person name="Shen M."/>
            <person name="Pai G."/>
            <person name="Van Aken S."/>
            <person name="Umayam L."/>
            <person name="Tallon L.J."/>
            <person name="Gill J.E."/>
            <person name="Adams M.D."/>
            <person name="Carrera A.J."/>
            <person name="Creasy T.H."/>
            <person name="Goodman H.M."/>
            <person name="Somerville C.R."/>
            <person name="Copenhaver G.P."/>
            <person name="Preuss D."/>
            <person name="Nierman W.C."/>
            <person name="White O."/>
            <person name="Eisen J.A."/>
            <person name="Salzberg S.L."/>
            <person name="Fraser C.M."/>
            <person name="Venter J.C."/>
        </authorList>
    </citation>
    <scope>NUCLEOTIDE SEQUENCE [LARGE SCALE GENOMIC DNA]</scope>
    <source>
        <strain>cv. Columbia</strain>
    </source>
</reference>
<reference key="3">
    <citation type="journal article" date="2017" name="Plant J.">
        <title>Araport11: a complete reannotation of the Arabidopsis thaliana reference genome.</title>
        <authorList>
            <person name="Cheng C.Y."/>
            <person name="Krishnakumar V."/>
            <person name="Chan A.P."/>
            <person name="Thibaud-Nissen F."/>
            <person name="Schobel S."/>
            <person name="Town C.D."/>
        </authorList>
    </citation>
    <scope>GENOME REANNOTATION</scope>
    <source>
        <strain>cv. Columbia</strain>
    </source>
</reference>
<reference key="4">
    <citation type="journal article" date="2003" name="Science">
        <title>Empirical analysis of transcriptional activity in the Arabidopsis genome.</title>
        <authorList>
            <person name="Yamada K."/>
            <person name="Lim J."/>
            <person name="Dale J.M."/>
            <person name="Chen H."/>
            <person name="Shinn P."/>
            <person name="Palm C.J."/>
            <person name="Southwick A.M."/>
            <person name="Wu H.C."/>
            <person name="Kim C.J."/>
            <person name="Nguyen M."/>
            <person name="Pham P.K."/>
            <person name="Cheuk R.F."/>
            <person name="Karlin-Newmann G."/>
            <person name="Liu S.X."/>
            <person name="Lam B."/>
            <person name="Sakano H."/>
            <person name="Wu T."/>
            <person name="Yu G."/>
            <person name="Miranda M."/>
            <person name="Quach H.L."/>
            <person name="Tripp M."/>
            <person name="Chang C.H."/>
            <person name="Lee J.M."/>
            <person name="Toriumi M.J."/>
            <person name="Chan M.M."/>
            <person name="Tang C.C."/>
            <person name="Onodera C.S."/>
            <person name="Deng J.M."/>
            <person name="Akiyama K."/>
            <person name="Ansari Y."/>
            <person name="Arakawa T."/>
            <person name="Banh J."/>
            <person name="Banno F."/>
            <person name="Bowser L."/>
            <person name="Brooks S.Y."/>
            <person name="Carninci P."/>
            <person name="Chao Q."/>
            <person name="Choy N."/>
            <person name="Enju A."/>
            <person name="Goldsmith A.D."/>
            <person name="Gurjal M."/>
            <person name="Hansen N.F."/>
            <person name="Hayashizaki Y."/>
            <person name="Johnson-Hopson C."/>
            <person name="Hsuan V.W."/>
            <person name="Iida K."/>
            <person name="Karnes M."/>
            <person name="Khan S."/>
            <person name="Koesema E."/>
            <person name="Ishida J."/>
            <person name="Jiang P.X."/>
            <person name="Jones T."/>
            <person name="Kawai J."/>
            <person name="Kamiya A."/>
            <person name="Meyers C."/>
            <person name="Nakajima M."/>
            <person name="Narusaka M."/>
            <person name="Seki M."/>
            <person name="Sakurai T."/>
            <person name="Satou M."/>
            <person name="Tamse R."/>
            <person name="Vaysberg M."/>
            <person name="Wallender E.K."/>
            <person name="Wong C."/>
            <person name="Yamamura Y."/>
            <person name="Yuan S."/>
            <person name="Shinozaki K."/>
            <person name="Davis R.W."/>
            <person name="Theologis A."/>
            <person name="Ecker J.R."/>
        </authorList>
    </citation>
    <scope>NUCLEOTIDE SEQUENCE [LARGE SCALE MRNA]</scope>
    <source>
        <strain>cv. Columbia</strain>
    </source>
</reference>
<reference key="5">
    <citation type="journal article" date="2004" name="Plant Cell">
        <title>Experimental analysis of the Arabidopsis mitochondrial proteome highlights signaling and regulatory components, provides assessment of targeting prediction programs, and indicates plant-specific mitochondrial proteins.</title>
        <authorList>
            <person name="Heazlewood J.L."/>
            <person name="Tonti-Filippini J.S."/>
            <person name="Gout A.M."/>
            <person name="Day D.A."/>
            <person name="Whelan J."/>
            <person name="Millar A.H."/>
        </authorList>
    </citation>
    <scope>IDENTIFICATION BY MASS SPECTROMETRY</scope>
    <scope>SUBCELLULAR LOCATION [LARGE SCALE ANALYSIS]</scope>
    <source>
        <strain>cv. Landsberg erecta</strain>
    </source>
</reference>
<reference key="6">
    <citation type="journal article" date="2010" name="Plant J.">
        <title>Arabidopsis has a cytosolic fumarase required for the massive allocation of photosynthate into fumaric acid and for rapid plant growth on high nitrogen.</title>
        <authorList>
            <person name="Pracharoenwattana I."/>
            <person name="Zhou W."/>
            <person name="Keech O."/>
            <person name="Francisco P.B."/>
            <person name="Udomchalothorn T."/>
            <person name="Tschoep H."/>
            <person name="Stitt M."/>
            <person name="Gibon Y."/>
            <person name="Smith S.M."/>
        </authorList>
    </citation>
    <scope>SUBCELLULAR LOCATION</scope>
    <scope>DISRUPTION PHENOTYPE</scope>
</reference>
<reference key="7">
    <citation type="journal article" date="2015" name="J. Exp. Bot.">
        <title>Identification of cleavage sites and substrate proteins for two mitochondrial intermediate peptidases in Arabidopsis thaliana.</title>
        <authorList>
            <person name="Carrie C."/>
            <person name="Venne A.S."/>
            <person name="Zahedi R.P."/>
            <person name="Soll J."/>
        </authorList>
    </citation>
    <scope>IDENTIFICATION BY MASS SPECTROMETRY</scope>
    <scope>CLEAVAGE OF TRANSIT PEPTIDE AFTER TYR-28</scope>
</reference>
<reference key="8">
    <citation type="journal article" date="2018" name="FEBS J.">
        <title>The complex allosteric and redox regulation of the fumarate hydratase and malate dehydratase reactions of Arabidopsis thaliana Fumarase 1 and 2 gives clues for understanding the massive accumulation of fumarate.</title>
        <authorList>
            <person name="Zubimendi J.P."/>
            <person name="Martinatto A."/>
            <person name="Valacco M.P."/>
            <person name="Moreno S."/>
            <person name="Andreo C.S."/>
            <person name="Drincovich M.F."/>
            <person name="Tronconi M.A."/>
        </authorList>
    </citation>
    <scope>FUNCTION</scope>
    <scope>CATALYTIC ACTIVITY</scope>
    <scope>BIOPHYSICOCHEMICAL PROPERTIES</scope>
    <scope>ACTIVITY REGULATION</scope>
    <scope>SUBUNIT</scope>
</reference>
<evidence type="ECO:0000250" key="1">
    <source>
        <dbReference type="UniProtKB" id="P05042"/>
    </source>
</evidence>
<evidence type="ECO:0000250" key="2">
    <source>
        <dbReference type="UniProtKB" id="P08417"/>
    </source>
</evidence>
<evidence type="ECO:0000250" key="3">
    <source>
        <dbReference type="UniProtKB" id="P10173"/>
    </source>
</evidence>
<evidence type="ECO:0000250" key="4">
    <source>
        <dbReference type="UniProtKB" id="P9WN93"/>
    </source>
</evidence>
<evidence type="ECO:0000269" key="5">
    <source>
    </source>
</evidence>
<evidence type="ECO:0000269" key="6">
    <source>
    </source>
</evidence>
<evidence type="ECO:0000269" key="7">
    <source>
    </source>
</evidence>
<evidence type="ECO:0000269" key="8">
    <source>
    </source>
</evidence>
<evidence type="ECO:0000303" key="9">
    <source>
    </source>
</evidence>
<evidence type="ECO:0000303" key="10">
    <source>
    </source>
</evidence>
<evidence type="ECO:0000305" key="11"/>
<evidence type="ECO:0000305" key="12">
    <source>
    </source>
</evidence>
<dbReference type="EC" id="4.2.1.2" evidence="8"/>
<dbReference type="EMBL" id="U82202">
    <property type="protein sequence ID" value="AAB39989.1"/>
    <property type="molecule type" value="mRNA"/>
</dbReference>
<dbReference type="EMBL" id="AC002535">
    <property type="protein sequence ID" value="AAC62859.1"/>
    <property type="molecule type" value="Genomic_DNA"/>
</dbReference>
<dbReference type="EMBL" id="CP002685">
    <property type="protein sequence ID" value="AEC10852.1"/>
    <property type="molecule type" value="Genomic_DNA"/>
</dbReference>
<dbReference type="EMBL" id="CP002685">
    <property type="protein sequence ID" value="AEC10853.1"/>
    <property type="molecule type" value="Genomic_DNA"/>
</dbReference>
<dbReference type="EMBL" id="CP002685">
    <property type="protein sequence ID" value="ANM62150.1"/>
    <property type="molecule type" value="Genomic_DNA"/>
</dbReference>
<dbReference type="EMBL" id="AF020303">
    <property type="protein sequence ID" value="AAB71399.1"/>
    <property type="molecule type" value="Genomic_DNA"/>
</dbReference>
<dbReference type="EMBL" id="AY054252">
    <property type="protein sequence ID" value="AAL06911.1"/>
    <property type="molecule type" value="mRNA"/>
</dbReference>
<dbReference type="EMBL" id="AY062460">
    <property type="protein sequence ID" value="AAL32538.1"/>
    <property type="molecule type" value="mRNA"/>
</dbReference>
<dbReference type="EMBL" id="BT003361">
    <property type="protein sequence ID" value="AAO29979.1"/>
    <property type="molecule type" value="mRNA"/>
</dbReference>
<dbReference type="PIR" id="T00433">
    <property type="entry name" value="T00433"/>
</dbReference>
<dbReference type="RefSeq" id="NP_001078075.1">
    <property type="nucleotide sequence ID" value="NM_001084606.2"/>
</dbReference>
<dbReference type="RefSeq" id="NP_001324328.1">
    <property type="nucleotide sequence ID" value="NM_001337266.1"/>
</dbReference>
<dbReference type="RefSeq" id="NP_182273.1">
    <property type="nucleotide sequence ID" value="NM_130319.4"/>
</dbReference>
<dbReference type="SMR" id="P93033"/>
<dbReference type="BioGRID" id="4699">
    <property type="interactions" value="5"/>
</dbReference>
<dbReference type="FunCoup" id="P93033">
    <property type="interactions" value="3256"/>
</dbReference>
<dbReference type="IntAct" id="P93033">
    <property type="interactions" value="2"/>
</dbReference>
<dbReference type="STRING" id="3702.P93033"/>
<dbReference type="GlyGen" id="P93033">
    <property type="glycosylation" value="1 site"/>
</dbReference>
<dbReference type="iPTMnet" id="P93033"/>
<dbReference type="MetOSite" id="P93033"/>
<dbReference type="SwissPalm" id="P93033"/>
<dbReference type="PaxDb" id="3702-AT2G47510.1"/>
<dbReference type="ProteomicsDB" id="230004"/>
<dbReference type="EnsemblPlants" id="AT2G47510.1">
    <property type="protein sequence ID" value="AT2G47510.1"/>
    <property type="gene ID" value="AT2G47510"/>
</dbReference>
<dbReference type="EnsemblPlants" id="AT2G47510.2">
    <property type="protein sequence ID" value="AT2G47510.2"/>
    <property type="gene ID" value="AT2G47510"/>
</dbReference>
<dbReference type="EnsemblPlants" id="AT2G47510.3">
    <property type="protein sequence ID" value="AT2G47510.3"/>
    <property type="gene ID" value="AT2G47510"/>
</dbReference>
<dbReference type="GeneID" id="819364"/>
<dbReference type="Gramene" id="AT2G47510.1">
    <property type="protein sequence ID" value="AT2G47510.1"/>
    <property type="gene ID" value="AT2G47510"/>
</dbReference>
<dbReference type="Gramene" id="AT2G47510.2">
    <property type="protein sequence ID" value="AT2G47510.2"/>
    <property type="gene ID" value="AT2G47510"/>
</dbReference>
<dbReference type="Gramene" id="AT2G47510.3">
    <property type="protein sequence ID" value="AT2G47510.3"/>
    <property type="gene ID" value="AT2G47510"/>
</dbReference>
<dbReference type="KEGG" id="ath:AT2G47510"/>
<dbReference type="Araport" id="AT2G47510"/>
<dbReference type="TAIR" id="AT2G47510">
    <property type="gene designation" value="FUM1"/>
</dbReference>
<dbReference type="eggNOG" id="KOG1317">
    <property type="taxonomic scope" value="Eukaryota"/>
</dbReference>
<dbReference type="HOGENOM" id="CLU_021594_4_1_1"/>
<dbReference type="InParanoid" id="P93033"/>
<dbReference type="OMA" id="AKWRAQT"/>
<dbReference type="OrthoDB" id="1738025at2759"/>
<dbReference type="PhylomeDB" id="P93033"/>
<dbReference type="BRENDA" id="4.2.1.2">
    <property type="organism ID" value="399"/>
</dbReference>
<dbReference type="SABIO-RK" id="P93033"/>
<dbReference type="UniPathway" id="UPA00223">
    <property type="reaction ID" value="UER01007"/>
</dbReference>
<dbReference type="PRO" id="PR:P93033"/>
<dbReference type="Proteomes" id="UP000006548">
    <property type="component" value="Chromosome 2"/>
</dbReference>
<dbReference type="ExpressionAtlas" id="P93033">
    <property type="expression patterns" value="baseline and differential"/>
</dbReference>
<dbReference type="GO" id="GO:0005829">
    <property type="term" value="C:cytosol"/>
    <property type="evidence" value="ECO:0007005"/>
    <property type="project" value="TAIR"/>
</dbReference>
<dbReference type="GO" id="GO:0005739">
    <property type="term" value="C:mitochondrion"/>
    <property type="evidence" value="ECO:0007005"/>
    <property type="project" value="TAIR"/>
</dbReference>
<dbReference type="GO" id="GO:0004333">
    <property type="term" value="F:fumarate hydratase activity"/>
    <property type="evidence" value="ECO:0000314"/>
    <property type="project" value="UniProtKB"/>
</dbReference>
<dbReference type="GO" id="GO:0006106">
    <property type="term" value="P:fumarate metabolic process"/>
    <property type="evidence" value="ECO:0000314"/>
    <property type="project" value="UniProtKB"/>
</dbReference>
<dbReference type="GO" id="GO:0006108">
    <property type="term" value="P:malate metabolic process"/>
    <property type="evidence" value="ECO:0000314"/>
    <property type="project" value="UniProtKB"/>
</dbReference>
<dbReference type="GO" id="GO:0048868">
    <property type="term" value="P:pollen tube development"/>
    <property type="evidence" value="ECO:0000315"/>
    <property type="project" value="TAIR"/>
</dbReference>
<dbReference type="GO" id="GO:0051262">
    <property type="term" value="P:protein tetramerization"/>
    <property type="evidence" value="ECO:0000314"/>
    <property type="project" value="UniProtKB"/>
</dbReference>
<dbReference type="GO" id="GO:0006099">
    <property type="term" value="P:tricarboxylic acid cycle"/>
    <property type="evidence" value="ECO:0007669"/>
    <property type="project" value="UniProtKB-UniPathway"/>
</dbReference>
<dbReference type="CDD" id="cd01362">
    <property type="entry name" value="Fumarase_classII"/>
    <property type="match status" value="1"/>
</dbReference>
<dbReference type="FunFam" id="1.10.40.30:FF:000002">
    <property type="entry name" value="Fumarate hydratase class II"/>
    <property type="match status" value="1"/>
</dbReference>
<dbReference type="FunFam" id="1.10.275.10:FF:000001">
    <property type="entry name" value="Fumarate hydratase, mitochondrial"/>
    <property type="match status" value="1"/>
</dbReference>
<dbReference type="FunFam" id="1.20.200.10:FF:000001">
    <property type="entry name" value="Fumarate hydratase, mitochondrial"/>
    <property type="match status" value="1"/>
</dbReference>
<dbReference type="Gene3D" id="1.10.40.30">
    <property type="entry name" value="Fumarase/aspartase (C-terminal domain)"/>
    <property type="match status" value="1"/>
</dbReference>
<dbReference type="Gene3D" id="1.20.200.10">
    <property type="entry name" value="Fumarase/aspartase (Central domain)"/>
    <property type="match status" value="1"/>
</dbReference>
<dbReference type="Gene3D" id="1.10.275.10">
    <property type="entry name" value="Fumarase/aspartase (N-terminal domain)"/>
    <property type="match status" value="1"/>
</dbReference>
<dbReference type="HAMAP" id="MF_00743">
    <property type="entry name" value="FumaraseC"/>
    <property type="match status" value="1"/>
</dbReference>
<dbReference type="InterPro" id="IPR005677">
    <property type="entry name" value="Fum_hydII"/>
</dbReference>
<dbReference type="InterPro" id="IPR024083">
    <property type="entry name" value="Fumarase/histidase_N"/>
</dbReference>
<dbReference type="InterPro" id="IPR018951">
    <property type="entry name" value="Fumarase_C_C"/>
</dbReference>
<dbReference type="InterPro" id="IPR020557">
    <property type="entry name" value="Fumarate_lyase_CS"/>
</dbReference>
<dbReference type="InterPro" id="IPR000362">
    <property type="entry name" value="Fumarate_lyase_fam"/>
</dbReference>
<dbReference type="InterPro" id="IPR022761">
    <property type="entry name" value="Fumarate_lyase_N"/>
</dbReference>
<dbReference type="InterPro" id="IPR008948">
    <property type="entry name" value="L-Aspartase-like"/>
</dbReference>
<dbReference type="NCBIfam" id="TIGR00979">
    <property type="entry name" value="fumC_II"/>
    <property type="match status" value="1"/>
</dbReference>
<dbReference type="NCBIfam" id="NF008909">
    <property type="entry name" value="PRK12273.1"/>
    <property type="match status" value="1"/>
</dbReference>
<dbReference type="PANTHER" id="PTHR11444">
    <property type="entry name" value="ASPARTATEAMMONIA/ARGININOSUCCINATE/ADENYLOSUCCINATE LYASE"/>
    <property type="match status" value="1"/>
</dbReference>
<dbReference type="PANTHER" id="PTHR11444:SF1">
    <property type="entry name" value="FUMARATE HYDRATASE, MITOCHONDRIAL"/>
    <property type="match status" value="1"/>
</dbReference>
<dbReference type="Pfam" id="PF10415">
    <property type="entry name" value="FumaraseC_C"/>
    <property type="match status" value="1"/>
</dbReference>
<dbReference type="Pfam" id="PF00206">
    <property type="entry name" value="Lyase_1"/>
    <property type="match status" value="1"/>
</dbReference>
<dbReference type="PRINTS" id="PR00149">
    <property type="entry name" value="FUMRATELYASE"/>
</dbReference>
<dbReference type="SUPFAM" id="SSF48557">
    <property type="entry name" value="L-aspartase-like"/>
    <property type="match status" value="1"/>
</dbReference>
<dbReference type="PROSITE" id="PS00163">
    <property type="entry name" value="FUMARATE_LYASES"/>
    <property type="match status" value="1"/>
</dbReference>
<accession>P93033</accession>
<accession>O24649</accession>
<protein>
    <recommendedName>
        <fullName evidence="9">Fumarate hydratase 1, mitochondrial</fullName>
        <shortName evidence="10">AtFUM1</shortName>
        <shortName evidence="9">Fumarase 1</shortName>
        <ecNumber evidence="8">4.2.1.2</ecNumber>
    </recommendedName>
</protein>
<keyword id="KW-0456">Lyase</keyword>
<keyword id="KW-0496">Mitochondrion</keyword>
<keyword id="KW-1185">Reference proteome</keyword>
<keyword id="KW-0809">Transit peptide</keyword>
<keyword id="KW-0816">Tricarboxylic acid cycle</keyword>